<keyword id="KW-0131">Cell cycle</keyword>
<keyword id="KW-0132">Cell division</keyword>
<keyword id="KW-0143">Chaperone</keyword>
<keyword id="KW-0963">Cytoplasm</keyword>
<keyword id="KW-0413">Isomerase</keyword>
<keyword id="KW-0697">Rotamase</keyword>
<dbReference type="EC" id="5.2.1.8" evidence="1"/>
<dbReference type="EMBL" id="CP000243">
    <property type="protein sequence ID" value="ABE05964.1"/>
    <property type="molecule type" value="Genomic_DNA"/>
</dbReference>
<dbReference type="RefSeq" id="WP_001198385.1">
    <property type="nucleotide sequence ID" value="NZ_CP064825.1"/>
</dbReference>
<dbReference type="SMR" id="Q1RFA0"/>
<dbReference type="KEGG" id="eci:UTI89_C0463"/>
<dbReference type="HOGENOM" id="CLU_033058_2_0_6"/>
<dbReference type="Proteomes" id="UP000001952">
    <property type="component" value="Chromosome"/>
</dbReference>
<dbReference type="GO" id="GO:0005737">
    <property type="term" value="C:cytoplasm"/>
    <property type="evidence" value="ECO:0007669"/>
    <property type="project" value="UniProtKB-SubCell"/>
</dbReference>
<dbReference type="GO" id="GO:0003755">
    <property type="term" value="F:peptidyl-prolyl cis-trans isomerase activity"/>
    <property type="evidence" value="ECO:0007669"/>
    <property type="project" value="UniProtKB-UniRule"/>
</dbReference>
<dbReference type="GO" id="GO:0044183">
    <property type="term" value="F:protein folding chaperone"/>
    <property type="evidence" value="ECO:0007669"/>
    <property type="project" value="TreeGrafter"/>
</dbReference>
<dbReference type="GO" id="GO:0043022">
    <property type="term" value="F:ribosome binding"/>
    <property type="evidence" value="ECO:0007669"/>
    <property type="project" value="TreeGrafter"/>
</dbReference>
<dbReference type="GO" id="GO:0051083">
    <property type="term" value="P:'de novo' cotranslational protein folding"/>
    <property type="evidence" value="ECO:0007669"/>
    <property type="project" value="TreeGrafter"/>
</dbReference>
<dbReference type="GO" id="GO:0051301">
    <property type="term" value="P:cell division"/>
    <property type="evidence" value="ECO:0007669"/>
    <property type="project" value="UniProtKB-KW"/>
</dbReference>
<dbReference type="GO" id="GO:0061077">
    <property type="term" value="P:chaperone-mediated protein folding"/>
    <property type="evidence" value="ECO:0007669"/>
    <property type="project" value="TreeGrafter"/>
</dbReference>
<dbReference type="GO" id="GO:0015031">
    <property type="term" value="P:protein transport"/>
    <property type="evidence" value="ECO:0007669"/>
    <property type="project" value="UniProtKB-UniRule"/>
</dbReference>
<dbReference type="GO" id="GO:0043335">
    <property type="term" value="P:protein unfolding"/>
    <property type="evidence" value="ECO:0007669"/>
    <property type="project" value="TreeGrafter"/>
</dbReference>
<dbReference type="FunFam" id="1.10.3120.10:FF:000001">
    <property type="entry name" value="Trigger factor"/>
    <property type="match status" value="1"/>
</dbReference>
<dbReference type="FunFam" id="3.10.50.40:FF:000001">
    <property type="entry name" value="Trigger factor"/>
    <property type="match status" value="1"/>
</dbReference>
<dbReference type="FunFam" id="3.30.70.1050:FF:000001">
    <property type="entry name" value="Trigger factor"/>
    <property type="match status" value="1"/>
</dbReference>
<dbReference type="Gene3D" id="3.10.50.40">
    <property type="match status" value="1"/>
</dbReference>
<dbReference type="Gene3D" id="3.30.70.1050">
    <property type="entry name" value="Trigger factor ribosome-binding domain"/>
    <property type="match status" value="1"/>
</dbReference>
<dbReference type="Gene3D" id="1.10.3120.10">
    <property type="entry name" value="Trigger factor, C-terminal domain"/>
    <property type="match status" value="1"/>
</dbReference>
<dbReference type="HAMAP" id="MF_00303">
    <property type="entry name" value="Trigger_factor_Tig"/>
    <property type="match status" value="1"/>
</dbReference>
<dbReference type="InterPro" id="IPR046357">
    <property type="entry name" value="PPIase_dom_sf"/>
</dbReference>
<dbReference type="InterPro" id="IPR001179">
    <property type="entry name" value="PPIase_FKBP_dom"/>
</dbReference>
<dbReference type="InterPro" id="IPR005215">
    <property type="entry name" value="Trig_fac"/>
</dbReference>
<dbReference type="InterPro" id="IPR008880">
    <property type="entry name" value="Trigger_fac_C"/>
</dbReference>
<dbReference type="InterPro" id="IPR037041">
    <property type="entry name" value="Trigger_fac_C_sf"/>
</dbReference>
<dbReference type="InterPro" id="IPR008881">
    <property type="entry name" value="Trigger_fac_ribosome-bd_bac"/>
</dbReference>
<dbReference type="InterPro" id="IPR036611">
    <property type="entry name" value="Trigger_fac_ribosome-bd_sf"/>
</dbReference>
<dbReference type="InterPro" id="IPR027304">
    <property type="entry name" value="Trigger_fact/SurA_dom_sf"/>
</dbReference>
<dbReference type="NCBIfam" id="TIGR00115">
    <property type="entry name" value="tig"/>
    <property type="match status" value="1"/>
</dbReference>
<dbReference type="PANTHER" id="PTHR30560">
    <property type="entry name" value="TRIGGER FACTOR CHAPERONE AND PEPTIDYL-PROLYL CIS/TRANS ISOMERASE"/>
    <property type="match status" value="1"/>
</dbReference>
<dbReference type="PANTHER" id="PTHR30560:SF3">
    <property type="entry name" value="TRIGGER FACTOR-LIKE PROTEIN TIG, CHLOROPLASTIC"/>
    <property type="match status" value="1"/>
</dbReference>
<dbReference type="Pfam" id="PF00254">
    <property type="entry name" value="FKBP_C"/>
    <property type="match status" value="1"/>
</dbReference>
<dbReference type="Pfam" id="PF05698">
    <property type="entry name" value="Trigger_C"/>
    <property type="match status" value="1"/>
</dbReference>
<dbReference type="Pfam" id="PF05697">
    <property type="entry name" value="Trigger_N"/>
    <property type="match status" value="1"/>
</dbReference>
<dbReference type="PIRSF" id="PIRSF003095">
    <property type="entry name" value="Trigger_factor"/>
    <property type="match status" value="1"/>
</dbReference>
<dbReference type="SUPFAM" id="SSF54534">
    <property type="entry name" value="FKBP-like"/>
    <property type="match status" value="1"/>
</dbReference>
<dbReference type="SUPFAM" id="SSF109998">
    <property type="entry name" value="Triger factor/SurA peptide-binding domain-like"/>
    <property type="match status" value="1"/>
</dbReference>
<dbReference type="SUPFAM" id="SSF102735">
    <property type="entry name" value="Trigger factor ribosome-binding domain"/>
    <property type="match status" value="1"/>
</dbReference>
<dbReference type="PROSITE" id="PS50059">
    <property type="entry name" value="FKBP_PPIASE"/>
    <property type="match status" value="1"/>
</dbReference>
<reference key="1">
    <citation type="journal article" date="2006" name="Proc. Natl. Acad. Sci. U.S.A.">
        <title>Identification of genes subject to positive selection in uropathogenic strains of Escherichia coli: a comparative genomics approach.</title>
        <authorList>
            <person name="Chen S.L."/>
            <person name="Hung C.-S."/>
            <person name="Xu J."/>
            <person name="Reigstad C.S."/>
            <person name="Magrini V."/>
            <person name="Sabo A."/>
            <person name="Blasiar D."/>
            <person name="Bieri T."/>
            <person name="Meyer R.R."/>
            <person name="Ozersky P."/>
            <person name="Armstrong J.R."/>
            <person name="Fulton R.S."/>
            <person name="Latreille J.P."/>
            <person name="Spieth J."/>
            <person name="Hooton T.M."/>
            <person name="Mardis E.R."/>
            <person name="Hultgren S.J."/>
            <person name="Gordon J.I."/>
        </authorList>
    </citation>
    <scope>NUCLEOTIDE SEQUENCE [LARGE SCALE GENOMIC DNA]</scope>
    <source>
        <strain>UTI89 / UPEC</strain>
    </source>
</reference>
<proteinExistence type="inferred from homology"/>
<organism>
    <name type="scientific">Escherichia coli (strain UTI89 / UPEC)</name>
    <dbReference type="NCBI Taxonomy" id="364106"/>
    <lineage>
        <taxon>Bacteria</taxon>
        <taxon>Pseudomonadati</taxon>
        <taxon>Pseudomonadota</taxon>
        <taxon>Gammaproteobacteria</taxon>
        <taxon>Enterobacterales</taxon>
        <taxon>Enterobacteriaceae</taxon>
        <taxon>Escherichia</taxon>
    </lineage>
</organism>
<name>TIG_ECOUT</name>
<comment type="function">
    <text evidence="1">Involved in protein export. Acts as a chaperone by maintaining the newly synthesized protein in an open conformation. Functions as a peptidyl-prolyl cis-trans isomerase.</text>
</comment>
<comment type="catalytic activity">
    <reaction evidence="1">
        <text>[protein]-peptidylproline (omega=180) = [protein]-peptidylproline (omega=0)</text>
        <dbReference type="Rhea" id="RHEA:16237"/>
        <dbReference type="Rhea" id="RHEA-COMP:10747"/>
        <dbReference type="Rhea" id="RHEA-COMP:10748"/>
        <dbReference type="ChEBI" id="CHEBI:83833"/>
        <dbReference type="ChEBI" id="CHEBI:83834"/>
        <dbReference type="EC" id="5.2.1.8"/>
    </reaction>
</comment>
<comment type="subunit">
    <text evidence="1">Homodimer and monomer. In vivo most of the ribosomes are in complex with monomeric TF. Uncomplexed TF, however, is in a monomer-dimer equilibrium with approximately two thirds of TF existing in a dimeric state.</text>
</comment>
<comment type="subcellular location">
    <subcellularLocation>
        <location>Cytoplasm</location>
    </subcellularLocation>
    <text evidence="1">About half TF is bound to the ribosome near the polypeptide exit tunnel while the other half is free in the cytoplasm.</text>
</comment>
<comment type="domain">
    <text evidence="1">Consists of 3 domains; the N-terminus binds the ribosome, the middle domain has PPIase activity, while the C-terminus has intrinsic chaperone activity on its own.</text>
</comment>
<comment type="similarity">
    <text evidence="1">Belongs to the FKBP-type PPIase family. Tig subfamily.</text>
</comment>
<evidence type="ECO:0000255" key="1">
    <source>
        <dbReference type="HAMAP-Rule" id="MF_00303"/>
    </source>
</evidence>
<gene>
    <name evidence="1" type="primary">tig</name>
    <name type="ordered locus">UTI89_C0463</name>
</gene>
<sequence>MQVSVETTQGLGRRVTITIAADSIETAVKSELVNVAKKVRIDGFRKGKVPMNIVAQRYGASVRQDVLGDLMSRNFIDAIIKEKINPAGAPTYVPGEYKLGEDFTYSVEFEVYPEVELQGLEAIEVEKPIVEVTDADVDGMLDTLRKQQATWKEKDGAVEAEDRVTIDFTGSVDGEEFEGGKASDFVLAMGQGRMIPGFEDGIKGHKAGEEFTIDVTFPEEYHAENLKGKAAKFAINLKKVEERELPELTAEFIKRFGVEDGSVEGLRAEVRKNMERELKSAIRNRVKSQAIEGLVKANDIDVPAALIDSEIDVLRRQAAQRFGGNEKQALELPRELFEEQAKRRVVVGLLLGEVIRTNELKADEERVKGLIEEMASAYEDPKEVIEFYSKNKELMDNMRNVALEEQAVEAVLAKAKVTEKETTFNELMN</sequence>
<accession>Q1RFA0</accession>
<feature type="chain" id="PRO_0000256558" description="Trigger factor">
    <location>
        <begin position="1"/>
        <end position="429"/>
    </location>
</feature>
<feature type="domain" description="PPIase FKBP-type" evidence="1">
    <location>
        <begin position="161"/>
        <end position="246"/>
    </location>
</feature>
<protein>
    <recommendedName>
        <fullName evidence="1">Trigger factor</fullName>
        <shortName evidence="1">TF</shortName>
        <ecNumber evidence="1">5.2.1.8</ecNumber>
    </recommendedName>
    <alternativeName>
        <fullName evidence="1">PPIase</fullName>
    </alternativeName>
</protein>